<keyword id="KW-1185">Reference proteome</keyword>
<organism>
    <name type="scientific">Vaccinia virus (strain Copenhagen)</name>
    <name type="common">VACV</name>
    <dbReference type="NCBI Taxonomy" id="10249"/>
    <lineage>
        <taxon>Viruses</taxon>
        <taxon>Varidnaviria</taxon>
        <taxon>Bamfordvirae</taxon>
        <taxon>Nucleocytoviricota</taxon>
        <taxon>Pokkesviricetes</taxon>
        <taxon>Chitovirales</taxon>
        <taxon>Poxviridae</taxon>
        <taxon>Chordopoxvirinae</taxon>
        <taxon>Orthopoxvirus</taxon>
        <taxon>Vaccinia virus</taxon>
    </lineage>
</organism>
<feature type="chain" id="PRO_0000099660" description="Uncharacterized 8.6 kDa protein">
    <location>
        <begin position="1"/>
        <end position="77"/>
    </location>
</feature>
<reference key="1">
    <citation type="journal article" date="1990" name="Virology">
        <title>The complete DNA sequence of vaccinia virus.</title>
        <authorList>
            <person name="Goebel S.J."/>
            <person name="Johnson G.P."/>
            <person name="Perkus M.E."/>
            <person name="Davis S.W."/>
            <person name="Winslow J.P."/>
            <person name="Paoletti E."/>
        </authorList>
    </citation>
    <scope>NUCLEOTIDE SEQUENCE [LARGE SCALE GENOMIC DNA]</scope>
</reference>
<reference key="2">
    <citation type="journal article" date="1990" name="Virology">
        <title>Appendix to 'The complete DNA sequence of vaccinia virus'.</title>
        <authorList>
            <person name="Goebel S.J."/>
            <person name="Johnson G.P."/>
            <person name="Perkus M.E."/>
            <person name="Davis S.W."/>
            <person name="Winslow J.P."/>
            <person name="Paoletti E."/>
        </authorList>
    </citation>
    <scope>COMPLETE GENOME</scope>
</reference>
<dbReference type="EMBL" id="M35027">
    <property type="protein sequence ID" value="AAA48178.1"/>
    <property type="molecule type" value="Genomic_DNA"/>
</dbReference>
<dbReference type="PIR" id="D42525">
    <property type="entry name" value="D42525"/>
</dbReference>
<dbReference type="Proteomes" id="UP000008269">
    <property type="component" value="Segment"/>
</dbReference>
<accession>P20526</accession>
<sequence length="77" mass="8635">MFANAIHLYFLFVNSQCLDTRLDRATTILESQHIISFTKLTKSNSPESESTLSFSLNNRSMSPYCLIAKSSSVINAE</sequence>
<name>YVAQ_VACCC</name>
<gene>
    <name type="ORF">A ORF Q</name>
</gene>
<protein>
    <recommendedName>
        <fullName>Uncharacterized 8.6 kDa protein</fullName>
    </recommendedName>
</protein>
<organismHost>
    <name type="scientific">Homo sapiens</name>
    <name type="common">Human</name>
    <dbReference type="NCBI Taxonomy" id="9606"/>
</organismHost>
<proteinExistence type="predicted"/>